<evidence type="ECO:0000250" key="1">
    <source>
        <dbReference type="UniProtKB" id="Q9VFK3"/>
    </source>
</evidence>
<evidence type="ECO:0000256" key="2">
    <source>
        <dbReference type="SAM" id="MobiDB-lite"/>
    </source>
</evidence>
<evidence type="ECO:0000305" key="3"/>
<evidence type="ECO:0000312" key="4">
    <source>
        <dbReference type="EMBL" id="EDW81590.1"/>
    </source>
</evidence>
<dbReference type="EMBL" id="CH964232">
    <property type="protein sequence ID" value="EDW81590.1"/>
    <property type="molecule type" value="Genomic_DNA"/>
</dbReference>
<dbReference type="RefSeq" id="XP_002070604.1">
    <property type="nucleotide sequence ID" value="XM_002070568.2"/>
</dbReference>
<dbReference type="STRING" id="7260.B4N943"/>
<dbReference type="EnsemblMetazoa" id="FBtr0242802">
    <property type="protein sequence ID" value="FBpp0241294"/>
    <property type="gene ID" value="FBgn0214162"/>
</dbReference>
<dbReference type="EnsemblMetazoa" id="XM_047009391.1">
    <property type="protein sequence ID" value="XP_046865347.1"/>
    <property type="gene ID" value="LOC6647755"/>
</dbReference>
<dbReference type="EnsemblMetazoa" id="XM_047009392.1">
    <property type="protein sequence ID" value="XP_046865348.1"/>
    <property type="gene ID" value="LOC6647755"/>
</dbReference>
<dbReference type="eggNOG" id="ENOG502T96N">
    <property type="taxonomic scope" value="Eukaryota"/>
</dbReference>
<dbReference type="HOGENOM" id="CLU_120156_0_0_1"/>
<dbReference type="OMA" id="LPQRWGQ"/>
<dbReference type="OrthoDB" id="7867455at2759"/>
<dbReference type="PhylomeDB" id="B4N943"/>
<dbReference type="Proteomes" id="UP000007798">
    <property type="component" value="Unassembled WGS sequence"/>
</dbReference>
<dbReference type="GO" id="GO:0007291">
    <property type="term" value="P:sperm individualization"/>
    <property type="evidence" value="ECO:0000250"/>
    <property type="project" value="UniProtKB"/>
</dbReference>
<dbReference type="InterPro" id="IPR031397">
    <property type="entry name" value="Soti"/>
</dbReference>
<dbReference type="Pfam" id="PF17079">
    <property type="entry name" value="SOTI"/>
    <property type="match status" value="1"/>
</dbReference>
<sequence>MANNRLMPEGQIIEEDMDGEDQNARELDIDDDDDSELDDMRVMRLNNPQVAMLLDAPHEPPFNLHHMLGPVAMPTRPRNKRSFLTVAKPFHIQPQMCALVANGWQAVQHLQPEMRRDYFANYLYENMNSKNYPNGEGLPHHWGQF</sequence>
<feature type="chain" id="PRO_0000379450" description="Male-specific protein scotti">
    <location>
        <begin position="1"/>
        <end position="145"/>
    </location>
</feature>
<feature type="region of interest" description="Disordered" evidence="2">
    <location>
        <begin position="1"/>
        <end position="34"/>
    </location>
</feature>
<feature type="compositionally biased region" description="Acidic residues" evidence="2">
    <location>
        <begin position="12"/>
        <end position="21"/>
    </location>
</feature>
<gene>
    <name evidence="1" type="primary">soti</name>
    <name type="ORF">GK12151</name>
</gene>
<name>SOTI_DROWI</name>
<reference evidence="4" key="1">
    <citation type="journal article" date="2007" name="Nature">
        <title>Evolution of genes and genomes on the Drosophila phylogeny.</title>
        <authorList>
            <consortium name="Drosophila 12 genomes consortium"/>
        </authorList>
    </citation>
    <scope>NUCLEOTIDE SEQUENCE [LARGE SCALE GENOMIC DNA]</scope>
    <source>
        <strain evidence="4">Tucson 14030-0811.24</strain>
    </source>
</reference>
<accession>B4N943</accession>
<comment type="function">
    <text evidence="1">Post-meiotically transcribed gene that has a role in late spermiogenesis; required for actin cone progression during spermatid individualization.</text>
</comment>
<comment type="similarity">
    <text evidence="3">Belongs to the male-specific scotti family.</text>
</comment>
<proteinExistence type="inferred from homology"/>
<organism>
    <name type="scientific">Drosophila willistoni</name>
    <name type="common">Fruit fly</name>
    <dbReference type="NCBI Taxonomy" id="7260"/>
    <lineage>
        <taxon>Eukaryota</taxon>
        <taxon>Metazoa</taxon>
        <taxon>Ecdysozoa</taxon>
        <taxon>Arthropoda</taxon>
        <taxon>Hexapoda</taxon>
        <taxon>Insecta</taxon>
        <taxon>Pterygota</taxon>
        <taxon>Neoptera</taxon>
        <taxon>Endopterygota</taxon>
        <taxon>Diptera</taxon>
        <taxon>Brachycera</taxon>
        <taxon>Muscomorpha</taxon>
        <taxon>Ephydroidea</taxon>
        <taxon>Drosophilidae</taxon>
        <taxon>Drosophila</taxon>
        <taxon>Sophophora</taxon>
    </lineage>
</organism>
<keyword id="KW-0217">Developmental protein</keyword>
<keyword id="KW-0221">Differentiation</keyword>
<keyword id="KW-1185">Reference proteome</keyword>
<keyword id="KW-0744">Spermatogenesis</keyword>
<protein>
    <recommendedName>
        <fullName evidence="1">Male-specific protein scotti</fullName>
    </recommendedName>
</protein>